<proteinExistence type="evidence at transcript level"/>
<feature type="initiator methionine" description="Removed" evidence="1">
    <location>
        <position position="1"/>
    </location>
</feature>
<feature type="chain" id="PRO_0000368031" description="Hemoglobin subunit beta">
    <location>
        <begin position="2"/>
        <end position="147"/>
    </location>
</feature>
<feature type="domain" description="Globin" evidence="3">
    <location>
        <begin position="3"/>
        <end position="147"/>
    </location>
</feature>
<feature type="binding site" description="distal binding residue">
    <location>
        <position position="64"/>
    </location>
    <ligand>
        <name>heme b</name>
        <dbReference type="ChEBI" id="CHEBI:60344"/>
    </ligand>
    <ligandPart>
        <name>Fe</name>
        <dbReference type="ChEBI" id="CHEBI:18248"/>
    </ligandPart>
</feature>
<feature type="binding site" description="proximal binding residue">
    <location>
        <position position="93"/>
    </location>
    <ligand>
        <name>heme b</name>
        <dbReference type="ChEBI" id="CHEBI:60344"/>
    </ligand>
    <ligandPart>
        <name>Fe</name>
        <dbReference type="ChEBI" id="CHEBI:18248"/>
    </ligandPart>
</feature>
<feature type="modified residue" description="N-acetylvaline" evidence="1">
    <location>
        <position position="2"/>
    </location>
</feature>
<feature type="modified residue" description="Phosphothreonine" evidence="2">
    <location>
        <position position="13"/>
    </location>
</feature>
<feature type="modified residue" description="Phosphoserine" evidence="2">
    <location>
        <position position="45"/>
    </location>
</feature>
<feature type="modified residue" description="N6-acetyllysine" evidence="2">
    <location>
        <position position="60"/>
    </location>
</feature>
<feature type="modified residue" description="N6-acetyllysine" evidence="2">
    <location>
        <position position="83"/>
    </location>
</feature>
<feature type="modified residue" description="S-nitrosocysteine" evidence="2">
    <location>
        <position position="94"/>
    </location>
</feature>
<feature type="modified residue" description="N6-acetyllysine" evidence="2">
    <location>
        <position position="145"/>
    </location>
</feature>
<protein>
    <recommendedName>
        <fullName>Hemoglobin subunit beta</fullName>
    </recommendedName>
    <alternativeName>
        <fullName>Beta-globin</fullName>
    </alternativeName>
    <alternativeName>
        <fullName>Hemoglobin beta chain</fullName>
    </alternativeName>
</protein>
<reference key="1">
    <citation type="submission" date="2008-04" db="EMBL/GenBank/DDBJ databases">
        <title>NISC comparative sequencing initiative.</title>
        <authorList>
            <person name="Antonellis A."/>
            <person name="Benjamin B."/>
            <person name="Blakesley R.W."/>
            <person name="Bouffard G.G."/>
            <person name="Brinkley C."/>
            <person name="Brooks S."/>
            <person name="Chu G."/>
            <person name="Chub I."/>
            <person name="Coleman H."/>
            <person name="Fuksenko T."/>
            <person name="Gestole M."/>
            <person name="Gregory M."/>
            <person name="Guan X."/>
            <person name="Gupta J."/>
            <person name="Gurson N."/>
            <person name="Han E."/>
            <person name="Han J."/>
            <person name="Hansen N."/>
            <person name="Hargrove A."/>
            <person name="Hines-Harris K."/>
            <person name="Ho S.-L."/>
            <person name="Hu P."/>
            <person name="Hunter G."/>
            <person name="Hurle B."/>
            <person name="Idol J.R."/>
            <person name="Johnson T."/>
            <person name="Knight E."/>
            <person name="Kwong P."/>
            <person name="Lee-Lin S.-Q."/>
            <person name="Legaspi R."/>
            <person name="Madden M."/>
            <person name="Maduro Q.L."/>
            <person name="Maduro V.B."/>
            <person name="Margulies E.H."/>
            <person name="Masiello C."/>
            <person name="Maskeri B."/>
            <person name="McDowell J."/>
            <person name="Merkulov G."/>
            <person name="Montemayor C."/>
            <person name="Mullikin J.C."/>
            <person name="Park M."/>
            <person name="Prasad A."/>
            <person name="Ramsahoye C."/>
            <person name="Reddix-Dugue N."/>
            <person name="Riebow N."/>
            <person name="Schandler K."/>
            <person name="Schueler M.G."/>
            <person name="Sison C."/>
            <person name="Smith L."/>
            <person name="Stantripop S."/>
            <person name="Thomas J.W."/>
            <person name="Thomas P.J."/>
            <person name="Tsipouri V."/>
            <person name="Young A."/>
            <person name="Green E.D."/>
        </authorList>
    </citation>
    <scope>NUCLEOTIDE SEQUENCE [LARGE SCALE GENOMIC DNA]</scope>
</reference>
<gene>
    <name type="primary">HBB</name>
</gene>
<sequence length="147" mass="16023">MVHLTGEEKGIVTGLWGKVNVDEVGGEALGRLLVVYPWTQRFFDSFGDLSSAAAVMGNAKVKAHGKKVLDSFSEGLKNLDNLKGTFAKLSELHCDKLHVDPENFRLLGNVLVCVLARNFGKEFTPQVQAAYQKVVVGVATALAHKYH</sequence>
<accession>B2KHZ4</accession>
<dbReference type="EMBL" id="DP000697">
    <property type="protein sequence ID" value="ACC62069.1"/>
    <property type="molecule type" value="Genomic_DNA"/>
</dbReference>
<dbReference type="SMR" id="B2KHZ4"/>
<dbReference type="FunCoup" id="B2KHZ4">
    <property type="interactions" value="173"/>
</dbReference>
<dbReference type="InParanoid" id="B2KHZ4"/>
<dbReference type="Proteomes" id="UP000472240">
    <property type="component" value="Unplaced"/>
</dbReference>
<dbReference type="GO" id="GO:0072562">
    <property type="term" value="C:blood microparticle"/>
    <property type="evidence" value="ECO:0007669"/>
    <property type="project" value="TreeGrafter"/>
</dbReference>
<dbReference type="GO" id="GO:0031838">
    <property type="term" value="C:haptoglobin-hemoglobin complex"/>
    <property type="evidence" value="ECO:0007669"/>
    <property type="project" value="TreeGrafter"/>
</dbReference>
<dbReference type="GO" id="GO:0005833">
    <property type="term" value="C:hemoglobin complex"/>
    <property type="evidence" value="ECO:0007669"/>
    <property type="project" value="InterPro"/>
</dbReference>
<dbReference type="GO" id="GO:0031720">
    <property type="term" value="F:haptoglobin binding"/>
    <property type="evidence" value="ECO:0007669"/>
    <property type="project" value="TreeGrafter"/>
</dbReference>
<dbReference type="GO" id="GO:0020037">
    <property type="term" value="F:heme binding"/>
    <property type="evidence" value="ECO:0007669"/>
    <property type="project" value="InterPro"/>
</dbReference>
<dbReference type="GO" id="GO:0031721">
    <property type="term" value="F:hemoglobin alpha binding"/>
    <property type="evidence" value="ECO:0007669"/>
    <property type="project" value="TreeGrafter"/>
</dbReference>
<dbReference type="GO" id="GO:0046872">
    <property type="term" value="F:metal ion binding"/>
    <property type="evidence" value="ECO:0007669"/>
    <property type="project" value="UniProtKB-KW"/>
</dbReference>
<dbReference type="GO" id="GO:0043177">
    <property type="term" value="F:organic acid binding"/>
    <property type="evidence" value="ECO:0007669"/>
    <property type="project" value="TreeGrafter"/>
</dbReference>
<dbReference type="GO" id="GO:0019825">
    <property type="term" value="F:oxygen binding"/>
    <property type="evidence" value="ECO:0007669"/>
    <property type="project" value="InterPro"/>
</dbReference>
<dbReference type="GO" id="GO:0005344">
    <property type="term" value="F:oxygen carrier activity"/>
    <property type="evidence" value="ECO:0007669"/>
    <property type="project" value="UniProtKB-KW"/>
</dbReference>
<dbReference type="GO" id="GO:0004601">
    <property type="term" value="F:peroxidase activity"/>
    <property type="evidence" value="ECO:0007669"/>
    <property type="project" value="TreeGrafter"/>
</dbReference>
<dbReference type="GO" id="GO:0042744">
    <property type="term" value="P:hydrogen peroxide catabolic process"/>
    <property type="evidence" value="ECO:0007669"/>
    <property type="project" value="TreeGrafter"/>
</dbReference>
<dbReference type="CDD" id="cd08925">
    <property type="entry name" value="Hb-beta-like"/>
    <property type="match status" value="1"/>
</dbReference>
<dbReference type="FunFam" id="1.10.490.10:FF:000001">
    <property type="entry name" value="Hemoglobin subunit beta"/>
    <property type="match status" value="1"/>
</dbReference>
<dbReference type="Gene3D" id="1.10.490.10">
    <property type="entry name" value="Globins"/>
    <property type="match status" value="1"/>
</dbReference>
<dbReference type="InterPro" id="IPR000971">
    <property type="entry name" value="Globin"/>
</dbReference>
<dbReference type="InterPro" id="IPR009050">
    <property type="entry name" value="Globin-like_sf"/>
</dbReference>
<dbReference type="InterPro" id="IPR012292">
    <property type="entry name" value="Globin/Proto"/>
</dbReference>
<dbReference type="InterPro" id="IPR002337">
    <property type="entry name" value="Hemoglobin_b"/>
</dbReference>
<dbReference type="InterPro" id="IPR050056">
    <property type="entry name" value="Hemoglobin_oxygen_transport"/>
</dbReference>
<dbReference type="PANTHER" id="PTHR11442">
    <property type="entry name" value="HEMOGLOBIN FAMILY MEMBER"/>
    <property type="match status" value="1"/>
</dbReference>
<dbReference type="PANTHER" id="PTHR11442:SF42">
    <property type="entry name" value="HEMOGLOBIN SUBUNIT BETA"/>
    <property type="match status" value="1"/>
</dbReference>
<dbReference type="Pfam" id="PF00042">
    <property type="entry name" value="Globin"/>
    <property type="match status" value="1"/>
</dbReference>
<dbReference type="PRINTS" id="PR00814">
    <property type="entry name" value="BETAHAEM"/>
</dbReference>
<dbReference type="SUPFAM" id="SSF46458">
    <property type="entry name" value="Globin-like"/>
    <property type="match status" value="1"/>
</dbReference>
<dbReference type="PROSITE" id="PS01033">
    <property type="entry name" value="GLOBIN"/>
    <property type="match status" value="1"/>
</dbReference>
<keyword id="KW-0007">Acetylation</keyword>
<keyword id="KW-0349">Heme</keyword>
<keyword id="KW-0408">Iron</keyword>
<keyword id="KW-0479">Metal-binding</keyword>
<keyword id="KW-0561">Oxygen transport</keyword>
<keyword id="KW-0597">Phosphoprotein</keyword>
<keyword id="KW-1185">Reference proteome</keyword>
<keyword id="KW-0702">S-nitrosylation</keyword>
<keyword id="KW-0813">Transport</keyword>
<comment type="function">
    <text>Involved in oxygen transport from the lung to the various peripheral tissues.</text>
</comment>
<comment type="subunit">
    <text>Heterotetramer of two alpha chains and two beta chains.</text>
</comment>
<comment type="tissue specificity">
    <text>Red blood cells.</text>
</comment>
<comment type="similarity">
    <text evidence="3">Belongs to the globin family.</text>
</comment>
<organism>
    <name type="scientific">Rhinolophus ferrumequinum</name>
    <name type="common">Greater horseshoe bat</name>
    <dbReference type="NCBI Taxonomy" id="59479"/>
    <lineage>
        <taxon>Eukaryota</taxon>
        <taxon>Metazoa</taxon>
        <taxon>Chordata</taxon>
        <taxon>Craniata</taxon>
        <taxon>Vertebrata</taxon>
        <taxon>Euteleostomi</taxon>
        <taxon>Mammalia</taxon>
        <taxon>Eutheria</taxon>
        <taxon>Laurasiatheria</taxon>
        <taxon>Chiroptera</taxon>
        <taxon>Yinpterochiroptera</taxon>
        <taxon>Rhinolophoidea</taxon>
        <taxon>Rhinolophidae</taxon>
        <taxon>Rhinolophinae</taxon>
        <taxon>Rhinolophus</taxon>
    </lineage>
</organism>
<name>HBB_RHIFE</name>
<evidence type="ECO:0000250" key="1">
    <source>
        <dbReference type="UniProtKB" id="P02086"/>
    </source>
</evidence>
<evidence type="ECO:0000250" key="2">
    <source>
        <dbReference type="UniProtKB" id="P68871"/>
    </source>
</evidence>
<evidence type="ECO:0000255" key="3">
    <source>
        <dbReference type="PROSITE-ProRule" id="PRU00238"/>
    </source>
</evidence>